<proteinExistence type="inferred from homology"/>
<protein>
    <recommendedName>
        <fullName evidence="1">NAD(P)H-quinone oxidoreductase subunit K</fullName>
        <ecNumber evidence="1">7.1.1.-</ecNumber>
    </recommendedName>
    <alternativeName>
        <fullName evidence="1">NAD(P)H dehydrogenase I subunit K</fullName>
    </alternativeName>
    <alternativeName>
        <fullName evidence="1">NDH-1 subunit K</fullName>
        <shortName evidence="1">NDH-K</shortName>
    </alternativeName>
</protein>
<name>NDHK_SYNJA</name>
<gene>
    <name evidence="1" type="primary">ndhK</name>
    <name type="ordered locus">CYA_1995</name>
</gene>
<dbReference type="EC" id="7.1.1.-" evidence="1"/>
<dbReference type="EMBL" id="CP000239">
    <property type="protein sequence ID" value="ABD00138.1"/>
    <property type="molecule type" value="Genomic_DNA"/>
</dbReference>
<dbReference type="SMR" id="Q2JT69"/>
<dbReference type="STRING" id="321327.CYA_1995"/>
<dbReference type="KEGG" id="cya:CYA_1995"/>
<dbReference type="eggNOG" id="COG0377">
    <property type="taxonomic scope" value="Bacteria"/>
</dbReference>
<dbReference type="HOGENOM" id="CLU_055737_2_1_3"/>
<dbReference type="Proteomes" id="UP000008818">
    <property type="component" value="Chromosome"/>
</dbReference>
<dbReference type="GO" id="GO:0031676">
    <property type="term" value="C:plasma membrane-derived thylakoid membrane"/>
    <property type="evidence" value="ECO:0007669"/>
    <property type="project" value="UniProtKB-SubCell"/>
</dbReference>
<dbReference type="GO" id="GO:0045271">
    <property type="term" value="C:respiratory chain complex I"/>
    <property type="evidence" value="ECO:0007669"/>
    <property type="project" value="TreeGrafter"/>
</dbReference>
<dbReference type="GO" id="GO:0051539">
    <property type="term" value="F:4 iron, 4 sulfur cluster binding"/>
    <property type="evidence" value="ECO:0007669"/>
    <property type="project" value="UniProtKB-KW"/>
</dbReference>
<dbReference type="GO" id="GO:0005506">
    <property type="term" value="F:iron ion binding"/>
    <property type="evidence" value="ECO:0007669"/>
    <property type="project" value="UniProtKB-UniRule"/>
</dbReference>
<dbReference type="GO" id="GO:0008137">
    <property type="term" value="F:NADH dehydrogenase (ubiquinone) activity"/>
    <property type="evidence" value="ECO:0007669"/>
    <property type="project" value="InterPro"/>
</dbReference>
<dbReference type="GO" id="GO:0048038">
    <property type="term" value="F:quinone binding"/>
    <property type="evidence" value="ECO:0007669"/>
    <property type="project" value="UniProtKB-KW"/>
</dbReference>
<dbReference type="GO" id="GO:0009060">
    <property type="term" value="P:aerobic respiration"/>
    <property type="evidence" value="ECO:0007669"/>
    <property type="project" value="TreeGrafter"/>
</dbReference>
<dbReference type="GO" id="GO:0015990">
    <property type="term" value="P:electron transport coupled proton transport"/>
    <property type="evidence" value="ECO:0007669"/>
    <property type="project" value="TreeGrafter"/>
</dbReference>
<dbReference type="GO" id="GO:0019684">
    <property type="term" value="P:photosynthesis, light reaction"/>
    <property type="evidence" value="ECO:0007669"/>
    <property type="project" value="UniProtKB-UniRule"/>
</dbReference>
<dbReference type="FunFam" id="3.40.50.12280:FF:000003">
    <property type="entry name" value="NAD(P)H-quinone oxidoreductase subunit K, chloroplastic"/>
    <property type="match status" value="1"/>
</dbReference>
<dbReference type="Gene3D" id="3.40.50.12280">
    <property type="match status" value="1"/>
</dbReference>
<dbReference type="HAMAP" id="MF_01356">
    <property type="entry name" value="NDH1_NuoB"/>
    <property type="match status" value="1"/>
</dbReference>
<dbReference type="InterPro" id="IPR006137">
    <property type="entry name" value="NADH_UbQ_OxRdtase-like_20kDa"/>
</dbReference>
<dbReference type="InterPro" id="IPR006138">
    <property type="entry name" value="NADH_UQ_OxRdtase_20Kd_su"/>
</dbReference>
<dbReference type="NCBIfam" id="TIGR01957">
    <property type="entry name" value="nuoB_fam"/>
    <property type="match status" value="1"/>
</dbReference>
<dbReference type="NCBIfam" id="NF005012">
    <property type="entry name" value="PRK06411.1"/>
    <property type="match status" value="1"/>
</dbReference>
<dbReference type="PANTHER" id="PTHR11995">
    <property type="entry name" value="NADH DEHYDROGENASE"/>
    <property type="match status" value="1"/>
</dbReference>
<dbReference type="PANTHER" id="PTHR11995:SF14">
    <property type="entry name" value="NADH DEHYDROGENASE [UBIQUINONE] IRON-SULFUR PROTEIN 7, MITOCHONDRIAL"/>
    <property type="match status" value="1"/>
</dbReference>
<dbReference type="Pfam" id="PF01058">
    <property type="entry name" value="Oxidored_q6"/>
    <property type="match status" value="1"/>
</dbReference>
<dbReference type="SUPFAM" id="SSF56770">
    <property type="entry name" value="HydA/Nqo6-like"/>
    <property type="match status" value="1"/>
</dbReference>
<dbReference type="PROSITE" id="PS01150">
    <property type="entry name" value="COMPLEX1_20K"/>
    <property type="match status" value="1"/>
</dbReference>
<comment type="function">
    <text evidence="1">NDH-1 shuttles electrons from an unknown electron donor, via FMN and iron-sulfur (Fe-S) centers, to quinones in the respiratory and/or the photosynthetic chain. The immediate electron acceptor for the enzyme in this species is believed to be plastoquinone. Couples the redox reaction to proton translocation, and thus conserves the redox energy in a proton gradient. Cyanobacterial NDH-1 also plays a role in inorganic carbon-concentration.</text>
</comment>
<comment type="catalytic activity">
    <reaction evidence="1">
        <text>a plastoquinone + NADH + (n+1) H(+)(in) = a plastoquinol + NAD(+) + n H(+)(out)</text>
        <dbReference type="Rhea" id="RHEA:42608"/>
        <dbReference type="Rhea" id="RHEA-COMP:9561"/>
        <dbReference type="Rhea" id="RHEA-COMP:9562"/>
        <dbReference type="ChEBI" id="CHEBI:15378"/>
        <dbReference type="ChEBI" id="CHEBI:17757"/>
        <dbReference type="ChEBI" id="CHEBI:57540"/>
        <dbReference type="ChEBI" id="CHEBI:57945"/>
        <dbReference type="ChEBI" id="CHEBI:62192"/>
    </reaction>
</comment>
<comment type="catalytic activity">
    <reaction evidence="1">
        <text>a plastoquinone + NADPH + (n+1) H(+)(in) = a plastoquinol + NADP(+) + n H(+)(out)</text>
        <dbReference type="Rhea" id="RHEA:42612"/>
        <dbReference type="Rhea" id="RHEA-COMP:9561"/>
        <dbReference type="Rhea" id="RHEA-COMP:9562"/>
        <dbReference type="ChEBI" id="CHEBI:15378"/>
        <dbReference type="ChEBI" id="CHEBI:17757"/>
        <dbReference type="ChEBI" id="CHEBI:57783"/>
        <dbReference type="ChEBI" id="CHEBI:58349"/>
        <dbReference type="ChEBI" id="CHEBI:62192"/>
    </reaction>
</comment>
<comment type="cofactor">
    <cofactor evidence="1">
        <name>[4Fe-4S] cluster</name>
        <dbReference type="ChEBI" id="CHEBI:49883"/>
    </cofactor>
    <text evidence="1">Binds 1 [4Fe-4S] cluster.</text>
</comment>
<comment type="subunit">
    <text evidence="1">NDH-1 can be composed of about 15 different subunits; different subcomplexes with different compositions have been identified which probably have different functions.</text>
</comment>
<comment type="subcellular location">
    <subcellularLocation>
        <location evidence="1">Cellular thylakoid membrane</location>
        <topology evidence="1">Peripheral membrane protein</topology>
        <orientation evidence="1">Cytoplasmic side</orientation>
    </subcellularLocation>
</comment>
<comment type="similarity">
    <text evidence="1">Belongs to the complex I 20 kDa subunit family.</text>
</comment>
<reference key="1">
    <citation type="journal article" date="2007" name="ISME J.">
        <title>Population level functional diversity in a microbial community revealed by comparative genomic and metagenomic analyses.</title>
        <authorList>
            <person name="Bhaya D."/>
            <person name="Grossman A.R."/>
            <person name="Steunou A.-S."/>
            <person name="Khuri N."/>
            <person name="Cohan F.M."/>
            <person name="Hamamura N."/>
            <person name="Melendrez M.C."/>
            <person name="Bateson M.M."/>
            <person name="Ward D.M."/>
            <person name="Heidelberg J.F."/>
        </authorList>
    </citation>
    <scope>NUCLEOTIDE SEQUENCE [LARGE SCALE GENOMIC DNA]</scope>
    <source>
        <strain>JA-3-3Ab</strain>
    </source>
</reference>
<evidence type="ECO:0000255" key="1">
    <source>
        <dbReference type="HAMAP-Rule" id="MF_01356"/>
    </source>
</evidence>
<organism>
    <name type="scientific">Synechococcus sp. (strain JA-3-3Ab)</name>
    <name type="common">Cyanobacteria bacterium Yellowstone A-Prime</name>
    <dbReference type="NCBI Taxonomy" id="321327"/>
    <lineage>
        <taxon>Bacteria</taxon>
        <taxon>Bacillati</taxon>
        <taxon>Cyanobacteriota</taxon>
        <taxon>Cyanophyceae</taxon>
        <taxon>Synechococcales</taxon>
        <taxon>Synechococcaceae</taxon>
        <taxon>Synechococcus</taxon>
    </lineage>
</organism>
<accession>Q2JT69</accession>
<sequence length="244" mass="26855">MTSQEPEVLFPASAPQVTTDLSNNVVLTTVNDLYNWAKMSSLWPLLYGTACCFIEFAAMLGSRFDFDRFGLLPRSSPRTADLIITAGTVTMKMAPALVKLYQQMAEPKYVIAMGACTISGGMFSSDSYTAVRGVDKLIPVDVYIPGCPPRPEAIMDAIVKLRKKIAAEDMRERGRLQQTHRYYTVKHNLKPVPEIITGKYLESETRQAPPPELAAAIGLPVPPALQTADFKQAEQQLKALRGGM</sequence>
<feature type="chain" id="PRO_0000358496" description="NAD(P)H-quinone oxidoreductase subunit K">
    <location>
        <begin position="1"/>
        <end position="244"/>
    </location>
</feature>
<feature type="binding site" evidence="1">
    <location>
        <position position="51"/>
    </location>
    <ligand>
        <name>[4Fe-4S] cluster</name>
        <dbReference type="ChEBI" id="CHEBI:49883"/>
    </ligand>
</feature>
<feature type="binding site" evidence="1">
    <location>
        <position position="52"/>
    </location>
    <ligand>
        <name>[4Fe-4S] cluster</name>
        <dbReference type="ChEBI" id="CHEBI:49883"/>
    </ligand>
</feature>
<feature type="binding site" evidence="1">
    <location>
        <position position="116"/>
    </location>
    <ligand>
        <name>[4Fe-4S] cluster</name>
        <dbReference type="ChEBI" id="CHEBI:49883"/>
    </ligand>
</feature>
<feature type="binding site" evidence="1">
    <location>
        <position position="147"/>
    </location>
    <ligand>
        <name>[4Fe-4S] cluster</name>
        <dbReference type="ChEBI" id="CHEBI:49883"/>
    </ligand>
</feature>
<keyword id="KW-0004">4Fe-4S</keyword>
<keyword id="KW-0408">Iron</keyword>
<keyword id="KW-0411">Iron-sulfur</keyword>
<keyword id="KW-0472">Membrane</keyword>
<keyword id="KW-0479">Metal-binding</keyword>
<keyword id="KW-0520">NAD</keyword>
<keyword id="KW-0521">NADP</keyword>
<keyword id="KW-0618">Plastoquinone</keyword>
<keyword id="KW-0874">Quinone</keyword>
<keyword id="KW-0793">Thylakoid</keyword>
<keyword id="KW-1278">Translocase</keyword>
<keyword id="KW-0813">Transport</keyword>